<evidence type="ECO:0000256" key="1">
    <source>
        <dbReference type="SAM" id="MobiDB-lite"/>
    </source>
</evidence>
<evidence type="ECO:0000305" key="2"/>
<name>Y457_MYCPN</name>
<reference key="1">
    <citation type="journal article" date="1996" name="Nucleic Acids Res.">
        <title>Complete sequence analysis of the genome of the bacterium Mycoplasma pneumoniae.</title>
        <authorList>
            <person name="Himmelreich R."/>
            <person name="Hilbert H."/>
            <person name="Plagens H."/>
            <person name="Pirkl E."/>
            <person name="Li B.-C."/>
            <person name="Herrmann R."/>
        </authorList>
    </citation>
    <scope>NUCLEOTIDE SEQUENCE [LARGE SCALE GENOMIC DNA]</scope>
    <source>
        <strain>ATCC 29342 / M129 / Subtype 1</strain>
    </source>
</reference>
<dbReference type="EMBL" id="U00089">
    <property type="protein sequence ID" value="AAB96032.1"/>
    <property type="molecule type" value="Genomic_DNA"/>
</dbReference>
<dbReference type="PIR" id="S73710">
    <property type="entry name" value="S73710"/>
</dbReference>
<dbReference type="SMR" id="P75326"/>
<dbReference type="IntAct" id="P75326">
    <property type="interactions" value="1"/>
</dbReference>
<dbReference type="STRING" id="272634.MPN_457"/>
<dbReference type="EnsemblBacteria" id="AAB96032">
    <property type="protein sequence ID" value="AAB96032"/>
    <property type="gene ID" value="MPN_457"/>
</dbReference>
<dbReference type="KEGG" id="mpn:MPN_457"/>
<dbReference type="HOGENOM" id="CLU_844184_0_0_14"/>
<dbReference type="Proteomes" id="UP000000808">
    <property type="component" value="Chromosome"/>
</dbReference>
<dbReference type="InterPro" id="IPR035158">
    <property type="entry name" value="DUF5396"/>
</dbReference>
<dbReference type="Pfam" id="PF17374">
    <property type="entry name" value="DUF5396"/>
    <property type="match status" value="1"/>
</dbReference>
<proteinExistence type="predicted"/>
<keyword id="KW-1185">Reference proteome</keyword>
<feature type="chain" id="PRO_0000210679" description="Uncharacterized protein MPN_457">
    <location>
        <begin position="1"/>
        <end position="329"/>
    </location>
</feature>
<feature type="region of interest" description="Disordered" evidence="1">
    <location>
        <begin position="109"/>
        <end position="147"/>
    </location>
</feature>
<feature type="compositionally biased region" description="Low complexity" evidence="1">
    <location>
        <begin position="116"/>
        <end position="131"/>
    </location>
</feature>
<protein>
    <recommendedName>
        <fullName>Uncharacterized protein MPN_457</fullName>
    </recommendedName>
</protein>
<gene>
    <name type="ordered locus">MPN_457</name>
    <name type="ORF">H08_orf329V</name>
    <name type="ORF">MP384</name>
</gene>
<accession>P75326</accession>
<comment type="similarity">
    <text evidence="2">To the C-terminal of MG321/MPN_456.</text>
</comment>
<sequence>MWITTTPWSKHSPNWVLADNGEKLIVPEIILGDAQGPTRNEWYIGLSSVLGFSFWSPDYDGVGTWLDAATQLNEQGGGDVITYSSGAHIVRTLLLAASQSNVHSTFTSKALGNDQTSSMTSSTTAVTVAKSGDGQQQTGEQKEEDWKDISKADLFKDDPYVLKNFGDSTTQAKMQSGGSTNSNGNGSQASLAFTKKALSLLKFLVDNKILKKDKVKEAIMNPDQYLSKRSKLDSNNQKPTKDDFIGSEFKDLYENAAKLNRFNSIWAEKDTDNAKFLITVVDSYFPVLPVPAAGLNETSPTLLKPWFQFRSAPSGNGTIRDYGFIPENK</sequence>
<organism>
    <name type="scientific">Mycoplasma pneumoniae (strain ATCC 29342 / M129 / Subtype 1)</name>
    <name type="common">Mycoplasmoides pneumoniae</name>
    <dbReference type="NCBI Taxonomy" id="272634"/>
    <lineage>
        <taxon>Bacteria</taxon>
        <taxon>Bacillati</taxon>
        <taxon>Mycoplasmatota</taxon>
        <taxon>Mycoplasmoidales</taxon>
        <taxon>Mycoplasmoidaceae</taxon>
        <taxon>Mycoplasmoides</taxon>
    </lineage>
</organism>